<name>TIG_RICPR</name>
<keyword id="KW-0131">Cell cycle</keyword>
<keyword id="KW-0132">Cell division</keyword>
<keyword id="KW-0143">Chaperone</keyword>
<keyword id="KW-0963">Cytoplasm</keyword>
<keyword id="KW-0413">Isomerase</keyword>
<keyword id="KW-1185">Reference proteome</keyword>
<keyword id="KW-0697">Rotamase</keyword>
<protein>
    <recommendedName>
        <fullName>Trigger factor</fullName>
        <shortName>TF</shortName>
        <ecNumber>5.2.1.8</ecNumber>
    </recommendedName>
    <alternativeName>
        <fullName>PPIase</fullName>
    </alternativeName>
</protein>
<sequence length="445" mass="51135">MGIIVLKNEGLNFHARISTPLSEIDDDIQKELLDLTKKVKVAGFRAGKVPVSIVKKKYGTSVRHDIIEKRINNLVNHIIKEYNLNIIGRPKIEELQNEPDKDLEFTVKIELLPKITIPDLKKISLDRPKLAVNSQDVEIQLEKLAALTKCYTKESKTKIKDGDQVTIDAIGYIKDRAFDGGKLNDFKVVIGSNTLIQGFEQQLIGSKTGNEVDVNVTFPENYHDKNLSGKDAHFVVQIKAVHTAEPTIIDEEFAKKFQSNSLEELRTHFAKQIENESEEAINTIMKMNLFDKLEKLLDFDVPESLLEQEKNILKSETDKNKHDGSLLNGKSSKEITEYYNKLALRRVRIGLLLAEYAKFKNLQLEPDDFKKIIMQQARNFPGQENMIFDFYKNNPRAIEGLKGPALEDKTVQYIFNNEIQLKEKRYTKEELEKYLETEEQRISLI</sequence>
<dbReference type="EC" id="5.2.1.8"/>
<dbReference type="EMBL" id="AJ235273">
    <property type="protein sequence ID" value="CAA15266.1"/>
    <property type="molecule type" value="Genomic_DNA"/>
</dbReference>
<dbReference type="PIR" id="B71646">
    <property type="entry name" value="B71646"/>
</dbReference>
<dbReference type="RefSeq" id="NP_221190.1">
    <property type="nucleotide sequence ID" value="NC_000963.1"/>
</dbReference>
<dbReference type="RefSeq" id="WP_004599675.1">
    <property type="nucleotide sequence ID" value="NC_000963.1"/>
</dbReference>
<dbReference type="SMR" id="Q9ZCB7"/>
<dbReference type="STRING" id="272947.gene:17555911"/>
<dbReference type="EnsemblBacteria" id="CAA15266">
    <property type="protein sequence ID" value="CAA15266"/>
    <property type="gene ID" value="CAA15266"/>
</dbReference>
<dbReference type="GeneID" id="57569965"/>
<dbReference type="KEGG" id="rpr:RP842"/>
<dbReference type="PATRIC" id="fig|272947.5.peg.880"/>
<dbReference type="eggNOG" id="COG0544">
    <property type="taxonomic scope" value="Bacteria"/>
</dbReference>
<dbReference type="HOGENOM" id="CLU_033058_3_2_5"/>
<dbReference type="OrthoDB" id="9767721at2"/>
<dbReference type="Proteomes" id="UP000002480">
    <property type="component" value="Chromosome"/>
</dbReference>
<dbReference type="GO" id="GO:0005737">
    <property type="term" value="C:cytoplasm"/>
    <property type="evidence" value="ECO:0007669"/>
    <property type="project" value="UniProtKB-SubCell"/>
</dbReference>
<dbReference type="GO" id="GO:0003755">
    <property type="term" value="F:peptidyl-prolyl cis-trans isomerase activity"/>
    <property type="evidence" value="ECO:0007669"/>
    <property type="project" value="UniProtKB-UniRule"/>
</dbReference>
<dbReference type="GO" id="GO:0044183">
    <property type="term" value="F:protein folding chaperone"/>
    <property type="evidence" value="ECO:0007669"/>
    <property type="project" value="TreeGrafter"/>
</dbReference>
<dbReference type="GO" id="GO:0043022">
    <property type="term" value="F:ribosome binding"/>
    <property type="evidence" value="ECO:0007669"/>
    <property type="project" value="TreeGrafter"/>
</dbReference>
<dbReference type="GO" id="GO:0051083">
    <property type="term" value="P:'de novo' cotranslational protein folding"/>
    <property type="evidence" value="ECO:0007669"/>
    <property type="project" value="TreeGrafter"/>
</dbReference>
<dbReference type="GO" id="GO:0051301">
    <property type="term" value="P:cell division"/>
    <property type="evidence" value="ECO:0007669"/>
    <property type="project" value="UniProtKB-KW"/>
</dbReference>
<dbReference type="GO" id="GO:0061077">
    <property type="term" value="P:chaperone-mediated protein folding"/>
    <property type="evidence" value="ECO:0007669"/>
    <property type="project" value="TreeGrafter"/>
</dbReference>
<dbReference type="GO" id="GO:0015031">
    <property type="term" value="P:protein transport"/>
    <property type="evidence" value="ECO:0007669"/>
    <property type="project" value="UniProtKB-UniRule"/>
</dbReference>
<dbReference type="GO" id="GO:0043335">
    <property type="term" value="P:protein unfolding"/>
    <property type="evidence" value="ECO:0007669"/>
    <property type="project" value="TreeGrafter"/>
</dbReference>
<dbReference type="FunFam" id="3.10.50.40:FF:000001">
    <property type="entry name" value="Trigger factor"/>
    <property type="match status" value="1"/>
</dbReference>
<dbReference type="Gene3D" id="3.10.50.40">
    <property type="match status" value="1"/>
</dbReference>
<dbReference type="Gene3D" id="3.30.70.1050">
    <property type="entry name" value="Trigger factor ribosome-binding domain"/>
    <property type="match status" value="1"/>
</dbReference>
<dbReference type="Gene3D" id="1.10.3120.10">
    <property type="entry name" value="Trigger factor, C-terminal domain"/>
    <property type="match status" value="1"/>
</dbReference>
<dbReference type="HAMAP" id="MF_00303">
    <property type="entry name" value="Trigger_factor_Tig"/>
    <property type="match status" value="1"/>
</dbReference>
<dbReference type="InterPro" id="IPR046357">
    <property type="entry name" value="PPIase_dom_sf"/>
</dbReference>
<dbReference type="InterPro" id="IPR001179">
    <property type="entry name" value="PPIase_FKBP_dom"/>
</dbReference>
<dbReference type="InterPro" id="IPR005215">
    <property type="entry name" value="Trig_fac"/>
</dbReference>
<dbReference type="InterPro" id="IPR008880">
    <property type="entry name" value="Trigger_fac_C"/>
</dbReference>
<dbReference type="InterPro" id="IPR037041">
    <property type="entry name" value="Trigger_fac_C_sf"/>
</dbReference>
<dbReference type="InterPro" id="IPR008881">
    <property type="entry name" value="Trigger_fac_ribosome-bd_bac"/>
</dbReference>
<dbReference type="InterPro" id="IPR036611">
    <property type="entry name" value="Trigger_fac_ribosome-bd_sf"/>
</dbReference>
<dbReference type="InterPro" id="IPR027304">
    <property type="entry name" value="Trigger_fact/SurA_dom_sf"/>
</dbReference>
<dbReference type="NCBIfam" id="TIGR00115">
    <property type="entry name" value="tig"/>
    <property type="match status" value="1"/>
</dbReference>
<dbReference type="PANTHER" id="PTHR30560">
    <property type="entry name" value="TRIGGER FACTOR CHAPERONE AND PEPTIDYL-PROLYL CIS/TRANS ISOMERASE"/>
    <property type="match status" value="1"/>
</dbReference>
<dbReference type="PANTHER" id="PTHR30560:SF3">
    <property type="entry name" value="TRIGGER FACTOR-LIKE PROTEIN TIG, CHLOROPLASTIC"/>
    <property type="match status" value="1"/>
</dbReference>
<dbReference type="Pfam" id="PF00254">
    <property type="entry name" value="FKBP_C"/>
    <property type="match status" value="1"/>
</dbReference>
<dbReference type="Pfam" id="PF05698">
    <property type="entry name" value="Trigger_C"/>
    <property type="match status" value="1"/>
</dbReference>
<dbReference type="Pfam" id="PF05697">
    <property type="entry name" value="Trigger_N"/>
    <property type="match status" value="1"/>
</dbReference>
<dbReference type="PIRSF" id="PIRSF003095">
    <property type="entry name" value="Trigger_factor"/>
    <property type="match status" value="1"/>
</dbReference>
<dbReference type="SUPFAM" id="SSF54534">
    <property type="entry name" value="FKBP-like"/>
    <property type="match status" value="1"/>
</dbReference>
<dbReference type="SUPFAM" id="SSF109998">
    <property type="entry name" value="Triger factor/SurA peptide-binding domain-like"/>
    <property type="match status" value="1"/>
</dbReference>
<dbReference type="SUPFAM" id="SSF102735">
    <property type="entry name" value="Trigger factor ribosome-binding domain"/>
    <property type="match status" value="1"/>
</dbReference>
<dbReference type="PROSITE" id="PS50059">
    <property type="entry name" value="FKBP_PPIASE"/>
    <property type="match status" value="1"/>
</dbReference>
<comment type="function">
    <text evidence="1">Involved in protein export. Acts as a chaperone by maintaining the newly synthesized protein in an open conformation. Functions as a peptidyl-prolyl cis-trans isomerase (By similarity).</text>
</comment>
<comment type="catalytic activity">
    <reaction>
        <text>[protein]-peptidylproline (omega=180) = [protein]-peptidylproline (omega=0)</text>
        <dbReference type="Rhea" id="RHEA:16237"/>
        <dbReference type="Rhea" id="RHEA-COMP:10747"/>
        <dbReference type="Rhea" id="RHEA-COMP:10748"/>
        <dbReference type="ChEBI" id="CHEBI:83833"/>
        <dbReference type="ChEBI" id="CHEBI:83834"/>
        <dbReference type="EC" id="5.2.1.8"/>
    </reaction>
</comment>
<comment type="subcellular location">
    <subcellularLocation>
        <location>Cytoplasm</location>
    </subcellularLocation>
    <text evidence="1">About half TF is bound to the ribosome near the polypeptide exit tunnel while the other half is free in the cytoplasm.</text>
</comment>
<comment type="domain">
    <text evidence="1">Consists of 3 domains; the N-terminus binds the ribosome, the middle domain has PPIase activity, while the C-terminus has intrinsic chaperone activity on its own.</text>
</comment>
<comment type="similarity">
    <text evidence="2">Belongs to the FKBP-type PPIase family. Tig subfamily.</text>
</comment>
<accession>Q9ZCB7</accession>
<feature type="chain" id="PRO_0000179417" description="Trigger factor">
    <location>
        <begin position="1"/>
        <end position="445"/>
    </location>
</feature>
<feature type="domain" description="PPIase FKBP-type">
    <location>
        <begin position="162"/>
        <end position="247"/>
    </location>
</feature>
<reference key="1">
    <citation type="journal article" date="1998" name="Nature">
        <title>The genome sequence of Rickettsia prowazekii and the origin of mitochondria.</title>
        <authorList>
            <person name="Andersson S.G.E."/>
            <person name="Zomorodipour A."/>
            <person name="Andersson J.O."/>
            <person name="Sicheritz-Ponten T."/>
            <person name="Alsmark U.C.M."/>
            <person name="Podowski R.M."/>
            <person name="Naeslund A.K."/>
            <person name="Eriksson A.-S."/>
            <person name="Winkler H.H."/>
            <person name="Kurland C.G."/>
        </authorList>
    </citation>
    <scope>NUCLEOTIDE SEQUENCE [LARGE SCALE GENOMIC DNA]</scope>
    <source>
        <strain>Madrid E</strain>
    </source>
</reference>
<organism>
    <name type="scientific">Rickettsia prowazekii (strain Madrid E)</name>
    <dbReference type="NCBI Taxonomy" id="272947"/>
    <lineage>
        <taxon>Bacteria</taxon>
        <taxon>Pseudomonadati</taxon>
        <taxon>Pseudomonadota</taxon>
        <taxon>Alphaproteobacteria</taxon>
        <taxon>Rickettsiales</taxon>
        <taxon>Rickettsiaceae</taxon>
        <taxon>Rickettsieae</taxon>
        <taxon>Rickettsia</taxon>
        <taxon>typhus group</taxon>
    </lineage>
</organism>
<evidence type="ECO:0000250" key="1"/>
<evidence type="ECO:0000305" key="2"/>
<proteinExistence type="inferred from homology"/>
<gene>
    <name type="primary">tig</name>
    <name type="ordered locus">RP842</name>
</gene>